<feature type="chain" id="PRO_0000291943" description="Transmembrane protein 41B">
    <location>
        <begin position="1"/>
        <end position="278"/>
    </location>
</feature>
<feature type="transmembrane region" description="Helical" evidence="3">
    <location>
        <begin position="39"/>
        <end position="59"/>
    </location>
</feature>
<feature type="transmembrane region" description="Helical" evidence="3">
    <location>
        <begin position="96"/>
        <end position="116"/>
    </location>
</feature>
<feature type="transmembrane region" description="Helical" evidence="3">
    <location>
        <begin position="142"/>
        <end position="162"/>
    </location>
</feature>
<feature type="transmembrane region" description="Helical" evidence="3">
    <location>
        <begin position="184"/>
        <end position="204"/>
    </location>
</feature>
<feature type="transmembrane region" description="Helical" evidence="3">
    <location>
        <begin position="212"/>
        <end position="232"/>
    </location>
</feature>
<feature type="transmembrane region" description="Helical" evidence="3">
    <location>
        <begin position="249"/>
        <end position="269"/>
    </location>
</feature>
<feature type="region of interest" description="Disordered" evidence="4">
    <location>
        <begin position="1"/>
        <end position="31"/>
    </location>
</feature>
<feature type="region of interest" description="VTT domain; required for its function in autophagy" evidence="2">
    <location>
        <begin position="127"/>
        <end position="238"/>
    </location>
</feature>
<proteinExistence type="evidence at transcript level"/>
<gene>
    <name evidence="2" type="primary">tmem41b</name>
</gene>
<accession>Q5U4K5</accession>
<keyword id="KW-0072">Autophagy</keyword>
<keyword id="KW-0256">Endoplasmic reticulum</keyword>
<keyword id="KW-0445">Lipid transport</keyword>
<keyword id="KW-0472">Membrane</keyword>
<keyword id="KW-0524">Neurogenesis</keyword>
<keyword id="KW-1185">Reference proteome</keyword>
<keyword id="KW-0812">Transmembrane</keyword>
<keyword id="KW-1133">Transmembrane helix</keyword>
<keyword id="KW-0813">Transport</keyword>
<comment type="function">
    <text evidence="1 2">Phospholipid scramblase involved in lipid homeostasis and membrane dynamics processes. Has phospholipid scramblase activity toward cholesterol and phosphatidylserine, as well as phosphatidylethanolamine and phosphatidylcholine. Required for autophagosome formation: participates in early stages of autophagosome biogenesis at the endoplasmic reticulum (ER) membrane by reequilibrating the leaflets of the ER as lipids are extracted by atg2 (atg2a or atg2b) to mediate autophagosome assembly. In addition to autophagy, involved in other processes in which phospholipid scramblase activity is required (By similarity). Required for normal motor neuron development (By similarity).</text>
</comment>
<comment type="catalytic activity">
    <reaction evidence="2">
        <text>a 1,2-diacyl-sn-glycero-3-phospho-L-serine(in) = a 1,2-diacyl-sn-glycero-3-phospho-L-serine(out)</text>
        <dbReference type="Rhea" id="RHEA:38663"/>
        <dbReference type="ChEBI" id="CHEBI:57262"/>
    </reaction>
</comment>
<comment type="catalytic activity">
    <reaction evidence="2">
        <text>cholesterol(in) = cholesterol(out)</text>
        <dbReference type="Rhea" id="RHEA:39747"/>
        <dbReference type="ChEBI" id="CHEBI:16113"/>
    </reaction>
</comment>
<comment type="catalytic activity">
    <reaction evidence="2">
        <text>a 1,2-diacyl-sn-glycero-3-phosphocholine(in) = a 1,2-diacyl-sn-glycero-3-phosphocholine(out)</text>
        <dbReference type="Rhea" id="RHEA:38571"/>
        <dbReference type="ChEBI" id="CHEBI:57643"/>
    </reaction>
</comment>
<comment type="catalytic activity">
    <reaction evidence="2">
        <text>a 1,2-diacyl-sn-glycero-3-phosphoethanolamine(in) = a 1,2-diacyl-sn-glycero-3-phosphoethanolamine(out)</text>
        <dbReference type="Rhea" id="RHEA:38895"/>
        <dbReference type="ChEBI" id="CHEBI:64612"/>
    </reaction>
</comment>
<comment type="subcellular location">
    <subcellularLocation>
        <location evidence="2">Endoplasmic reticulum membrane</location>
        <topology evidence="3">Multi-pass membrane protein</topology>
    </subcellularLocation>
    <subcellularLocation>
        <location evidence="2">Endomembrane system</location>
    </subcellularLocation>
    <text evidence="2">Localized to specific membrane structures termed mitochondria-associated membranes (MAMs) which connect the endoplasmic reticulum (ER) and the mitochondria.</text>
</comment>
<comment type="domain">
    <text evidence="2">The VTT domain was previously called the SNARE-assoc domain. As there is no evidence that this domain associates with SNARE proteins, it was renamed as VMP1, TMEM41, and TVP38 (VTT) domain.</text>
</comment>
<comment type="similarity">
    <text evidence="5">Belongs to the TMEM41 family.</text>
</comment>
<sequence length="278" mass="31212">MQVHERSHTGGHTFQCNHGNEKKAPAAGKVHSEGGSARMSLLILVSIFLCAASVMFLVYKYFPQLSEEELEKIKVPRDMDDAKALGKVLSKYKDTFYVEVLVAYFTTYIFLQTFAIPGSIFLSILSGFLYPFPLALFLVCLCSGLGASFCYLLSYLVGRPVVYKYLSDKAIKWSQQVERHRDHLINYIIFLRITPFLPNWFINITSPVINVPLKVFFLGTFIGVAPPSFVAIKAGTTLYQLTTAGEAVSWNSVIILMVLAVLSILPAIFQKKLKQKFE</sequence>
<organism>
    <name type="scientific">Xenopus laevis</name>
    <name type="common">African clawed frog</name>
    <dbReference type="NCBI Taxonomy" id="8355"/>
    <lineage>
        <taxon>Eukaryota</taxon>
        <taxon>Metazoa</taxon>
        <taxon>Chordata</taxon>
        <taxon>Craniata</taxon>
        <taxon>Vertebrata</taxon>
        <taxon>Euteleostomi</taxon>
        <taxon>Amphibia</taxon>
        <taxon>Batrachia</taxon>
        <taxon>Anura</taxon>
        <taxon>Pipoidea</taxon>
        <taxon>Pipidae</taxon>
        <taxon>Xenopodinae</taxon>
        <taxon>Xenopus</taxon>
        <taxon>Xenopus</taxon>
    </lineage>
</organism>
<reference key="1">
    <citation type="submission" date="2004-10" db="EMBL/GenBank/DDBJ databases">
        <authorList>
            <consortium name="NIH - Xenopus Gene Collection (XGC) project"/>
        </authorList>
    </citation>
    <scope>NUCLEOTIDE SEQUENCE [LARGE SCALE MRNA]</scope>
    <source>
        <tissue>Lung</tissue>
    </source>
</reference>
<name>TM41B_XENLA</name>
<protein>
    <recommendedName>
        <fullName evidence="5">Transmembrane protein 41B</fullName>
    </recommendedName>
</protein>
<dbReference type="EMBL" id="BC085059">
    <property type="protein sequence ID" value="AAH85059.1"/>
    <property type="molecule type" value="mRNA"/>
</dbReference>
<dbReference type="RefSeq" id="NP_001088592.1">
    <property type="nucleotide sequence ID" value="NM_001095123.2"/>
</dbReference>
<dbReference type="DNASU" id="495477"/>
<dbReference type="GeneID" id="495477"/>
<dbReference type="KEGG" id="xla:495477"/>
<dbReference type="AGR" id="Xenbase:XB-GENE-17334906"/>
<dbReference type="CTD" id="495477"/>
<dbReference type="Xenbase" id="XB-GENE-17334906">
    <property type="gene designation" value="tmem41b.L"/>
</dbReference>
<dbReference type="OrthoDB" id="3364966at2759"/>
<dbReference type="Proteomes" id="UP000186698">
    <property type="component" value="Chromosome 4L"/>
</dbReference>
<dbReference type="Bgee" id="495477">
    <property type="expression patterns" value="Expressed in oocyte and 19 other cell types or tissues"/>
</dbReference>
<dbReference type="GO" id="GO:0005789">
    <property type="term" value="C:endoplasmic reticulum membrane"/>
    <property type="evidence" value="ECO:0000250"/>
    <property type="project" value="UniProtKB"/>
</dbReference>
<dbReference type="GO" id="GO:0044233">
    <property type="term" value="C:mitochondria-associated endoplasmic reticulum membrane contact site"/>
    <property type="evidence" value="ECO:0000250"/>
    <property type="project" value="UniProtKB"/>
</dbReference>
<dbReference type="GO" id="GO:0017128">
    <property type="term" value="F:phospholipid scramblase activity"/>
    <property type="evidence" value="ECO:0000250"/>
    <property type="project" value="UniProtKB"/>
</dbReference>
<dbReference type="GO" id="GO:0000045">
    <property type="term" value="P:autophagosome assembly"/>
    <property type="evidence" value="ECO:0000250"/>
    <property type="project" value="UniProtKB"/>
</dbReference>
<dbReference type="GO" id="GO:0007399">
    <property type="term" value="P:nervous system development"/>
    <property type="evidence" value="ECO:0007669"/>
    <property type="project" value="UniProtKB-KW"/>
</dbReference>
<dbReference type="InterPro" id="IPR045014">
    <property type="entry name" value="TM41A/B"/>
</dbReference>
<dbReference type="InterPro" id="IPR032816">
    <property type="entry name" value="VTT_dom"/>
</dbReference>
<dbReference type="PANTHER" id="PTHR43220">
    <property type="match status" value="1"/>
</dbReference>
<dbReference type="PANTHER" id="PTHR43220:SF18">
    <property type="entry name" value="TRANSMEMBRANE PROTEIN 41B"/>
    <property type="match status" value="1"/>
</dbReference>
<dbReference type="Pfam" id="PF09335">
    <property type="entry name" value="VTT_dom"/>
    <property type="match status" value="1"/>
</dbReference>
<evidence type="ECO:0000250" key="1">
    <source>
        <dbReference type="UniProtKB" id="A1A5V7"/>
    </source>
</evidence>
<evidence type="ECO:0000250" key="2">
    <source>
        <dbReference type="UniProtKB" id="Q5BJD5"/>
    </source>
</evidence>
<evidence type="ECO:0000255" key="3"/>
<evidence type="ECO:0000256" key="4">
    <source>
        <dbReference type="SAM" id="MobiDB-lite"/>
    </source>
</evidence>
<evidence type="ECO:0000305" key="5"/>